<name>CLPP2_TREPA</name>
<reference key="1">
    <citation type="journal article" date="1998" name="Science">
        <title>Complete genome sequence of Treponema pallidum, the syphilis spirochete.</title>
        <authorList>
            <person name="Fraser C.M."/>
            <person name="Norris S.J."/>
            <person name="Weinstock G.M."/>
            <person name="White O."/>
            <person name="Sutton G.G."/>
            <person name="Dodson R.J."/>
            <person name="Gwinn M.L."/>
            <person name="Hickey E.K."/>
            <person name="Clayton R.A."/>
            <person name="Ketchum K.A."/>
            <person name="Sodergren E."/>
            <person name="Hardham J.M."/>
            <person name="McLeod M.P."/>
            <person name="Salzberg S.L."/>
            <person name="Peterson J.D."/>
            <person name="Khalak H.G."/>
            <person name="Richardson D.L."/>
            <person name="Howell J.K."/>
            <person name="Chidambaram M."/>
            <person name="Utterback T.R."/>
            <person name="McDonald L.A."/>
            <person name="Artiach P."/>
            <person name="Bowman C."/>
            <person name="Cotton M.D."/>
            <person name="Fujii C."/>
            <person name="Garland S.A."/>
            <person name="Hatch B."/>
            <person name="Horst K."/>
            <person name="Roberts K.M."/>
            <person name="Sandusky M."/>
            <person name="Weidman J.F."/>
            <person name="Smith H.O."/>
            <person name="Venter J.C."/>
        </authorList>
    </citation>
    <scope>NUCLEOTIDE SEQUENCE [LARGE SCALE GENOMIC DNA]</scope>
    <source>
        <strain>Nichols</strain>
    </source>
</reference>
<organism>
    <name type="scientific">Treponema pallidum (strain Nichols)</name>
    <dbReference type="NCBI Taxonomy" id="243276"/>
    <lineage>
        <taxon>Bacteria</taxon>
        <taxon>Pseudomonadati</taxon>
        <taxon>Spirochaetota</taxon>
        <taxon>Spirochaetia</taxon>
        <taxon>Spirochaetales</taxon>
        <taxon>Treponemataceae</taxon>
        <taxon>Treponema</taxon>
    </lineage>
</organism>
<keyword id="KW-0963">Cytoplasm</keyword>
<keyword id="KW-0378">Hydrolase</keyword>
<keyword id="KW-0645">Protease</keyword>
<keyword id="KW-1185">Reference proteome</keyword>
<keyword id="KW-0720">Serine protease</keyword>
<gene>
    <name evidence="1" type="primary">clpP2</name>
    <name type="synonym">clpP-2</name>
    <name type="ordered locus">TP_1041</name>
</gene>
<evidence type="ECO:0000255" key="1">
    <source>
        <dbReference type="HAMAP-Rule" id="MF_00444"/>
    </source>
</evidence>
<evidence type="ECO:0000305" key="2"/>
<dbReference type="EC" id="3.4.21.92" evidence="1"/>
<dbReference type="EMBL" id="AE000520">
    <property type="protein sequence ID" value="AAC26595.1"/>
    <property type="status" value="ALT_INIT"/>
    <property type="molecule type" value="Genomic_DNA"/>
</dbReference>
<dbReference type="PIR" id="H71250">
    <property type="entry name" value="H71250"/>
</dbReference>
<dbReference type="RefSeq" id="WP_014342706.1">
    <property type="nucleotide sequence ID" value="NC_021490.2"/>
</dbReference>
<dbReference type="SMR" id="O84003"/>
<dbReference type="STRING" id="243276.TP_1041"/>
<dbReference type="EnsemblBacteria" id="AAC26595">
    <property type="protein sequence ID" value="AAC26595"/>
    <property type="gene ID" value="TP_1041"/>
</dbReference>
<dbReference type="KEGG" id="tpa:TP_1041"/>
<dbReference type="eggNOG" id="COG0740">
    <property type="taxonomic scope" value="Bacteria"/>
</dbReference>
<dbReference type="HOGENOM" id="CLU_058707_4_0_12"/>
<dbReference type="OrthoDB" id="9802800at2"/>
<dbReference type="BRENDA" id="3.4.21.92">
    <property type="organism ID" value="6429"/>
</dbReference>
<dbReference type="Proteomes" id="UP000000811">
    <property type="component" value="Chromosome"/>
</dbReference>
<dbReference type="GO" id="GO:0005737">
    <property type="term" value="C:cytoplasm"/>
    <property type="evidence" value="ECO:0007669"/>
    <property type="project" value="UniProtKB-SubCell"/>
</dbReference>
<dbReference type="GO" id="GO:0009368">
    <property type="term" value="C:endopeptidase Clp complex"/>
    <property type="evidence" value="ECO:0007669"/>
    <property type="project" value="TreeGrafter"/>
</dbReference>
<dbReference type="GO" id="GO:0004176">
    <property type="term" value="F:ATP-dependent peptidase activity"/>
    <property type="evidence" value="ECO:0007669"/>
    <property type="project" value="InterPro"/>
</dbReference>
<dbReference type="GO" id="GO:0051117">
    <property type="term" value="F:ATPase binding"/>
    <property type="evidence" value="ECO:0007669"/>
    <property type="project" value="TreeGrafter"/>
</dbReference>
<dbReference type="GO" id="GO:0004252">
    <property type="term" value="F:serine-type endopeptidase activity"/>
    <property type="evidence" value="ECO:0007669"/>
    <property type="project" value="UniProtKB-UniRule"/>
</dbReference>
<dbReference type="GO" id="GO:0006515">
    <property type="term" value="P:protein quality control for misfolded or incompletely synthesized proteins"/>
    <property type="evidence" value="ECO:0007669"/>
    <property type="project" value="TreeGrafter"/>
</dbReference>
<dbReference type="CDD" id="cd07017">
    <property type="entry name" value="S14_ClpP_2"/>
    <property type="match status" value="1"/>
</dbReference>
<dbReference type="Gene3D" id="3.90.226.10">
    <property type="entry name" value="2-enoyl-CoA Hydratase, Chain A, domain 1"/>
    <property type="match status" value="1"/>
</dbReference>
<dbReference type="HAMAP" id="MF_00444">
    <property type="entry name" value="ClpP"/>
    <property type="match status" value="1"/>
</dbReference>
<dbReference type="InterPro" id="IPR001907">
    <property type="entry name" value="ClpP"/>
</dbReference>
<dbReference type="InterPro" id="IPR029045">
    <property type="entry name" value="ClpP/crotonase-like_dom_sf"/>
</dbReference>
<dbReference type="InterPro" id="IPR023562">
    <property type="entry name" value="ClpP/TepA"/>
</dbReference>
<dbReference type="NCBIfam" id="NF011089">
    <property type="entry name" value="PRK14512.1"/>
    <property type="match status" value="1"/>
</dbReference>
<dbReference type="PANTHER" id="PTHR10381">
    <property type="entry name" value="ATP-DEPENDENT CLP PROTEASE PROTEOLYTIC SUBUNIT"/>
    <property type="match status" value="1"/>
</dbReference>
<dbReference type="PANTHER" id="PTHR10381:SF70">
    <property type="entry name" value="ATP-DEPENDENT CLP PROTEASE PROTEOLYTIC SUBUNIT"/>
    <property type="match status" value="1"/>
</dbReference>
<dbReference type="Pfam" id="PF00574">
    <property type="entry name" value="CLP_protease"/>
    <property type="match status" value="1"/>
</dbReference>
<dbReference type="PRINTS" id="PR00127">
    <property type="entry name" value="CLPPROTEASEP"/>
</dbReference>
<dbReference type="SUPFAM" id="SSF52096">
    <property type="entry name" value="ClpP/crotonase"/>
    <property type="match status" value="1"/>
</dbReference>
<proteinExistence type="inferred from homology"/>
<sequence>MRCDATQEKRAHSESGESVFFQKFLETRQILLSGEISKDLAEGIVRQLFVLESLSVSKPIYMYVDSPGGDVDAGYAIFDVIRFVKTPVYTIGMGLVASAGVLVLLAAKKDCRFGLRNSRYLIHQPLSGMRGVATDIEIHARELEKTRSKLNALIASETGVSLDKVAQDTNRDYWLDASQALEYGLISNLIEKRADLPKK</sequence>
<protein>
    <recommendedName>
        <fullName evidence="1">ATP-dependent Clp protease proteolytic subunit 2</fullName>
        <ecNumber evidence="1">3.4.21.92</ecNumber>
    </recommendedName>
    <alternativeName>
        <fullName evidence="1">Endopeptidase Clp 2</fullName>
    </alternativeName>
</protein>
<accession>O84003</accession>
<feature type="chain" id="PRO_0000179705" description="ATP-dependent Clp protease proteolytic subunit 2">
    <location>
        <begin position="1"/>
        <end position="199"/>
    </location>
</feature>
<feature type="active site" description="Nucleophile" evidence="1">
    <location>
        <position position="98"/>
    </location>
</feature>
<feature type="active site" evidence="1">
    <location>
        <position position="123"/>
    </location>
</feature>
<comment type="function">
    <text evidence="1">Cleaves peptides in various proteins in a process that requires ATP hydrolysis. Has a chymotrypsin-like activity. Plays a major role in the degradation of misfolded proteins.</text>
</comment>
<comment type="catalytic activity">
    <reaction evidence="1">
        <text>Hydrolysis of proteins to small peptides in the presence of ATP and magnesium. alpha-casein is the usual test substrate. In the absence of ATP, only oligopeptides shorter than five residues are hydrolyzed (such as succinyl-Leu-Tyr-|-NHMec, and Leu-Tyr-Leu-|-Tyr-Trp, in which cleavage of the -Tyr-|-Leu- and -Tyr-|-Trp bonds also occurs).</text>
        <dbReference type="EC" id="3.4.21.92"/>
    </reaction>
</comment>
<comment type="subunit">
    <text evidence="1">Fourteen ClpP subunits assemble into 2 heptameric rings which stack back to back to give a disk-like structure with a central cavity, resembling the structure of eukaryotic proteasomes.</text>
</comment>
<comment type="subcellular location">
    <subcellularLocation>
        <location evidence="1">Cytoplasm</location>
    </subcellularLocation>
</comment>
<comment type="similarity">
    <text evidence="1">Belongs to the peptidase S14 family.</text>
</comment>
<comment type="sequence caution" evidence="2">
    <conflict type="erroneous initiation">
        <sequence resource="EMBL-CDS" id="AAC26595"/>
    </conflict>
</comment>